<organism>
    <name type="scientific">Methanococcus vannielii (strain ATCC 35089 / DSM 1224 / JCM 13029 / OCM 148 / SB)</name>
    <dbReference type="NCBI Taxonomy" id="406327"/>
    <lineage>
        <taxon>Archaea</taxon>
        <taxon>Methanobacteriati</taxon>
        <taxon>Methanobacteriota</taxon>
        <taxon>Methanomada group</taxon>
        <taxon>Methanococci</taxon>
        <taxon>Methanococcales</taxon>
        <taxon>Methanococcaceae</taxon>
        <taxon>Methanococcus</taxon>
    </lineage>
</organism>
<protein>
    <recommendedName>
        <fullName evidence="1">Large ribosomal subunit protein uL10</fullName>
    </recommendedName>
    <alternativeName>
        <fullName evidence="3">50S ribosomal protein L10</fullName>
    </alternativeName>
    <alternativeName>
        <fullName evidence="1">Acidic ribosomal protein P0 homolog</fullName>
    </alternativeName>
    <alternativeName>
        <fullName>ML2</fullName>
    </alternativeName>
</protein>
<feature type="chain" id="PRO_0000154798" description="Large ribosomal subunit protein uL10">
    <location>
        <begin position="1"/>
        <end position="336"/>
    </location>
</feature>
<feature type="region of interest" description="Disordered" evidence="2">
    <location>
        <begin position="305"/>
        <end position="336"/>
    </location>
</feature>
<feature type="compositionally biased region" description="Basic and acidic residues" evidence="2">
    <location>
        <begin position="311"/>
        <end position="326"/>
    </location>
</feature>
<reference key="1">
    <citation type="journal article" date="1989" name="FEBS Lett.">
        <title>An archaebacterial gene from Methanococcus vannielii encoding a protein homologous to the ribosomal protein L10 family.</title>
        <authorList>
            <person name="Koepke A.K.E."/>
            <person name="Baier G."/>
            <person name="Wittmann-Liebold B."/>
        </authorList>
    </citation>
    <scope>NUCLEOTIDE SEQUENCE [GENOMIC DNA]</scope>
    <scope>PROTEIN SEQUENCE OF 1-11</scope>
    <scope>SUBUNIT</scope>
</reference>
<reference key="2">
    <citation type="submission" date="2007-06" db="EMBL/GenBank/DDBJ databases">
        <title>Complete sequence of Methanococcus vannielii SB.</title>
        <authorList>
            <consortium name="US DOE Joint Genome Institute"/>
            <person name="Copeland A."/>
            <person name="Lucas S."/>
            <person name="Lapidus A."/>
            <person name="Barry K."/>
            <person name="Glavina del Rio T."/>
            <person name="Dalin E."/>
            <person name="Tice H."/>
            <person name="Pitluck S."/>
            <person name="Chain P."/>
            <person name="Malfatti S."/>
            <person name="Shin M."/>
            <person name="Vergez L."/>
            <person name="Schmutz J."/>
            <person name="Larimer F."/>
            <person name="Land M."/>
            <person name="Hauser L."/>
            <person name="Kyrpides N."/>
            <person name="Anderson I."/>
            <person name="Sieprawska-Lupa M."/>
            <person name="Whitman W.B."/>
            <person name="Richardson P."/>
        </authorList>
    </citation>
    <scope>NUCLEOTIDE SEQUENCE [LARGE SCALE GENOMIC DNA]</scope>
    <source>
        <strain>ATCC 35089 / DSM 1224 / JCM 13029 / OCM 148 / SB</strain>
    </source>
</reference>
<reference key="3">
    <citation type="journal article" date="1990" name="Nucleic Acids Res.">
        <title>Structure, organization and evolution of the L1 equivalent ribosomal protein gene of the archaebacterium Methanococcus vannielii.</title>
        <authorList>
            <person name="Baier G."/>
            <person name="Piendl W."/>
            <person name="Redl B."/>
            <person name="Stoeffler G."/>
        </authorList>
    </citation>
    <scope>NUCLEOTIDE SEQUENCE [GENOMIC DNA] OF 1-41</scope>
</reference>
<name>RL10_METVS</name>
<dbReference type="EMBL" id="X15352">
    <property type="protein sequence ID" value="CAA33410.1"/>
    <property type="molecule type" value="Genomic_DNA"/>
</dbReference>
<dbReference type="EMBL" id="CP000742">
    <property type="protein sequence ID" value="ABR55169.1"/>
    <property type="molecule type" value="Genomic_DNA"/>
</dbReference>
<dbReference type="EMBL" id="X16023">
    <property type="protein sequence ID" value="CAA34157.1"/>
    <property type="molecule type" value="Genomic_DNA"/>
</dbReference>
<dbReference type="PIR" id="S03956">
    <property type="entry name" value="R5MX10"/>
</dbReference>
<dbReference type="RefSeq" id="WP_012066084.1">
    <property type="nucleotide sequence ID" value="NC_009634.1"/>
</dbReference>
<dbReference type="SMR" id="P15826"/>
<dbReference type="STRING" id="406327.Mevan_1272"/>
<dbReference type="GeneID" id="5324660"/>
<dbReference type="KEGG" id="mvn:Mevan_1272"/>
<dbReference type="eggNOG" id="arCOG04288">
    <property type="taxonomic scope" value="Archaea"/>
</dbReference>
<dbReference type="HOGENOM" id="CLU_053173_0_0_2"/>
<dbReference type="OrthoDB" id="30930at2157"/>
<dbReference type="Proteomes" id="UP000001107">
    <property type="component" value="Chromosome"/>
</dbReference>
<dbReference type="GO" id="GO:0022625">
    <property type="term" value="C:cytosolic large ribosomal subunit"/>
    <property type="evidence" value="ECO:0007669"/>
    <property type="project" value="TreeGrafter"/>
</dbReference>
<dbReference type="GO" id="GO:0070180">
    <property type="term" value="F:large ribosomal subunit rRNA binding"/>
    <property type="evidence" value="ECO:0007669"/>
    <property type="project" value="UniProtKB-UniRule"/>
</dbReference>
<dbReference type="GO" id="GO:0003735">
    <property type="term" value="F:structural constituent of ribosome"/>
    <property type="evidence" value="ECO:0007669"/>
    <property type="project" value="TreeGrafter"/>
</dbReference>
<dbReference type="GO" id="GO:0002181">
    <property type="term" value="P:cytoplasmic translation"/>
    <property type="evidence" value="ECO:0007669"/>
    <property type="project" value="TreeGrafter"/>
</dbReference>
<dbReference type="GO" id="GO:0000027">
    <property type="term" value="P:ribosomal large subunit assembly"/>
    <property type="evidence" value="ECO:0007669"/>
    <property type="project" value="TreeGrafter"/>
</dbReference>
<dbReference type="CDD" id="cd05795">
    <property type="entry name" value="Ribosomal_P0_L10e"/>
    <property type="match status" value="1"/>
</dbReference>
<dbReference type="FunFam" id="3.90.105.20:FF:000001">
    <property type="entry name" value="60S acidic ribosomal protein P0"/>
    <property type="match status" value="1"/>
</dbReference>
<dbReference type="Gene3D" id="3.30.70.1730">
    <property type="match status" value="1"/>
</dbReference>
<dbReference type="Gene3D" id="3.90.105.20">
    <property type="match status" value="1"/>
</dbReference>
<dbReference type="Gene3D" id="6.10.140.760">
    <property type="match status" value="1"/>
</dbReference>
<dbReference type="HAMAP" id="MF_00280">
    <property type="entry name" value="Ribosomal_uL10_arch"/>
    <property type="match status" value="1"/>
</dbReference>
<dbReference type="InterPro" id="IPR050323">
    <property type="entry name" value="Ribosomal_protein_uL10"/>
</dbReference>
<dbReference type="InterPro" id="IPR001790">
    <property type="entry name" value="Ribosomal_uL10"/>
</dbReference>
<dbReference type="InterPro" id="IPR040637">
    <property type="entry name" value="Ribosomal_uL10-like_insert"/>
</dbReference>
<dbReference type="InterPro" id="IPR043164">
    <property type="entry name" value="Ribosomal_uL10-like_insert_sf"/>
</dbReference>
<dbReference type="InterPro" id="IPR043141">
    <property type="entry name" value="Ribosomal_uL10-like_sf"/>
</dbReference>
<dbReference type="InterPro" id="IPR022909">
    <property type="entry name" value="Ribosomal_uL10_arc"/>
</dbReference>
<dbReference type="NCBIfam" id="NF003096">
    <property type="entry name" value="PRK04019.1-2"/>
    <property type="match status" value="1"/>
</dbReference>
<dbReference type="NCBIfam" id="NF003098">
    <property type="entry name" value="PRK04019.1-5"/>
    <property type="match status" value="1"/>
</dbReference>
<dbReference type="PANTHER" id="PTHR45699">
    <property type="entry name" value="60S ACIDIC RIBOSOMAL PROTEIN P0"/>
    <property type="match status" value="1"/>
</dbReference>
<dbReference type="PANTHER" id="PTHR45699:SF3">
    <property type="entry name" value="LARGE RIBOSOMAL SUBUNIT PROTEIN UL10"/>
    <property type="match status" value="1"/>
</dbReference>
<dbReference type="Pfam" id="PF00466">
    <property type="entry name" value="Ribosomal_L10"/>
    <property type="match status" value="1"/>
</dbReference>
<dbReference type="Pfam" id="PF17777">
    <property type="entry name" value="RL10P_insert"/>
    <property type="match status" value="1"/>
</dbReference>
<dbReference type="SUPFAM" id="SSF160369">
    <property type="entry name" value="Ribosomal protein L10-like"/>
    <property type="match status" value="1"/>
</dbReference>
<accession>P15826</accession>
<accession>A6URP7</accession>
<gene>
    <name evidence="1" type="primary">rpl10</name>
    <name evidence="1" type="synonym">rplP0</name>
    <name type="ordered locus">Mevan_1272</name>
</gene>
<proteinExistence type="evidence at protein level"/>
<keyword id="KW-0903">Direct protein sequencing</keyword>
<keyword id="KW-0687">Ribonucleoprotein</keyword>
<keyword id="KW-0689">Ribosomal protein</keyword>
<keyword id="KW-0694">RNA-binding</keyword>
<keyword id="KW-0699">rRNA-binding</keyword>
<evidence type="ECO:0000255" key="1">
    <source>
        <dbReference type="HAMAP-Rule" id="MF_00280"/>
    </source>
</evidence>
<evidence type="ECO:0000256" key="2">
    <source>
        <dbReference type="SAM" id="MobiDB-lite"/>
    </source>
</evidence>
<evidence type="ECO:0000305" key="3"/>
<comment type="function">
    <text evidence="1">Forms part of the ribosomal stalk, playing a central role in the interaction of the ribosome with GTP-bound translation factors.</text>
</comment>
<comment type="subunit">
    <text evidence="1">Part of the 50S ribosomal subunit. Forms part of the ribosomal stalk which helps the ribosome interact with GTP-bound translation factors. Forms a heptameric L10(L12)2(L12)2(L12)2 complex, where L10 forms an elongated spine to which the L12 dimers bind in a sequential fashion.</text>
</comment>
<comment type="similarity">
    <text evidence="1">Belongs to the universal ribosomal protein uL10 family.</text>
</comment>
<sequence length="336" mass="35951">MIDAKSEHKIAPWKIEEVNALKELLKSANVIALIDMMEVPAVQLQEIRDKIRDQMTLKMSRNTLIKRAVEEVAEETGNPEFAKLVDYLDKGAAIVVTEMNPFKLFKTLEESKSPAPIKGGAIAPCDIEVKSGSTGMPPGPFLSELKAVGIPAAIDKGKIGIKEDKVVAKEGDVISPKLAVVLSALGIKPVTVGLNVLGVYEEGVIYTSDVLRIDEEEFLGKLQKAYTNAFNLSVNAVIPTSATIETIVQKAFNDAKAVSVESAFITEKTADAILGKAHAQMIAVAKLAGDEALDDDLKEQISSSAVVATEEAPKAETKKEEKKEEAAPAAGLGLLF</sequence>